<proteinExistence type="inferred from homology"/>
<feature type="chain" id="PRO_0000215070" description="PF03932 family protein CutC">
    <location>
        <begin position="1"/>
        <end position="245"/>
    </location>
</feature>
<sequence length="245" mass="26092">MTIQLEVCIDNLESLHYAQQGGASRIELCSSLALGGLTPSAGFMQLAAKHASIPVYAMIRPRQGDFLFSSDDVEIMLADIHAAKKAQLQGVVIGVLTQEGHIDRDILNSLMKEANGLGVTFHRAIDQCIDPMAALDNIMAAGCERILTSGLQANALDGVDMIAEMVTYCGDNLSIMAGAGVTATNAKQIITRTGIREIHLSGKSTRPSHMVQFANQAHMGSADIDDFSIPVTSVEKISAVINAIR</sequence>
<comment type="subcellular location">
    <subcellularLocation>
        <location evidence="1">Cytoplasm</location>
    </subcellularLocation>
</comment>
<comment type="similarity">
    <text evidence="1">Belongs to the CutC family.</text>
</comment>
<comment type="caution">
    <text evidence="1">Once thought to be involved in copper homeostasis, experiments in E.coli have shown this is not the case.</text>
</comment>
<keyword id="KW-0963">Cytoplasm</keyword>
<keyword id="KW-1185">Reference proteome</keyword>
<dbReference type="EMBL" id="CR378665">
    <property type="protein sequence ID" value="CAG19147.1"/>
    <property type="molecule type" value="Genomic_DNA"/>
</dbReference>
<dbReference type="RefSeq" id="WP_011217490.1">
    <property type="nucleotide sequence ID" value="NC_006370.1"/>
</dbReference>
<dbReference type="SMR" id="Q6LU78"/>
<dbReference type="STRING" id="298386.PBPRA0734"/>
<dbReference type="KEGG" id="ppr:PBPRA0734"/>
<dbReference type="eggNOG" id="COG3142">
    <property type="taxonomic scope" value="Bacteria"/>
</dbReference>
<dbReference type="HOGENOM" id="CLU_050555_3_1_6"/>
<dbReference type="Proteomes" id="UP000000593">
    <property type="component" value="Chromosome 1"/>
</dbReference>
<dbReference type="GO" id="GO:0005737">
    <property type="term" value="C:cytoplasm"/>
    <property type="evidence" value="ECO:0007669"/>
    <property type="project" value="UniProtKB-SubCell"/>
</dbReference>
<dbReference type="GO" id="GO:0005507">
    <property type="term" value="F:copper ion binding"/>
    <property type="evidence" value="ECO:0007669"/>
    <property type="project" value="TreeGrafter"/>
</dbReference>
<dbReference type="FunFam" id="3.20.20.380:FF:000001">
    <property type="entry name" value="Copper homeostasis protein CutC"/>
    <property type="match status" value="1"/>
</dbReference>
<dbReference type="Gene3D" id="3.20.20.380">
    <property type="entry name" value="Copper homeostasis (CutC) domain"/>
    <property type="match status" value="1"/>
</dbReference>
<dbReference type="HAMAP" id="MF_00795">
    <property type="entry name" value="CutC"/>
    <property type="match status" value="1"/>
</dbReference>
<dbReference type="InterPro" id="IPR005627">
    <property type="entry name" value="CutC-like"/>
</dbReference>
<dbReference type="InterPro" id="IPR036822">
    <property type="entry name" value="CutC-like_dom_sf"/>
</dbReference>
<dbReference type="PANTHER" id="PTHR12598">
    <property type="entry name" value="COPPER HOMEOSTASIS PROTEIN CUTC"/>
    <property type="match status" value="1"/>
</dbReference>
<dbReference type="PANTHER" id="PTHR12598:SF0">
    <property type="entry name" value="COPPER HOMEOSTASIS PROTEIN CUTC HOMOLOG"/>
    <property type="match status" value="1"/>
</dbReference>
<dbReference type="Pfam" id="PF03932">
    <property type="entry name" value="CutC"/>
    <property type="match status" value="1"/>
</dbReference>
<dbReference type="SUPFAM" id="SSF110395">
    <property type="entry name" value="CutC-like"/>
    <property type="match status" value="1"/>
</dbReference>
<evidence type="ECO:0000255" key="1">
    <source>
        <dbReference type="HAMAP-Rule" id="MF_00795"/>
    </source>
</evidence>
<reference key="1">
    <citation type="journal article" date="2005" name="Science">
        <title>Life at depth: Photobacterium profundum genome sequence and expression analysis.</title>
        <authorList>
            <person name="Vezzi A."/>
            <person name="Campanaro S."/>
            <person name="D'Angelo M."/>
            <person name="Simonato F."/>
            <person name="Vitulo N."/>
            <person name="Lauro F.M."/>
            <person name="Cestaro A."/>
            <person name="Malacrida G."/>
            <person name="Simionati B."/>
            <person name="Cannata N."/>
            <person name="Romualdi C."/>
            <person name="Bartlett D.H."/>
            <person name="Valle G."/>
        </authorList>
    </citation>
    <scope>NUCLEOTIDE SEQUENCE [LARGE SCALE GENOMIC DNA]</scope>
    <source>
        <strain>ATCC BAA-1253 / SS9</strain>
    </source>
</reference>
<name>CUTC_PHOPR</name>
<protein>
    <recommendedName>
        <fullName evidence="1">PF03932 family protein CutC</fullName>
    </recommendedName>
</protein>
<organism>
    <name type="scientific">Photobacterium profundum (strain SS9)</name>
    <dbReference type="NCBI Taxonomy" id="298386"/>
    <lineage>
        <taxon>Bacteria</taxon>
        <taxon>Pseudomonadati</taxon>
        <taxon>Pseudomonadota</taxon>
        <taxon>Gammaproteobacteria</taxon>
        <taxon>Vibrionales</taxon>
        <taxon>Vibrionaceae</taxon>
        <taxon>Photobacterium</taxon>
    </lineage>
</organism>
<gene>
    <name evidence="1" type="primary">cutC</name>
    <name type="ordered locus">PBPRA0734</name>
</gene>
<accession>Q6LU78</accession>